<accession>Q600B6</accession>
<protein>
    <recommendedName>
        <fullName evidence="2">Elongation factor Tu</fullName>
        <shortName evidence="2">EF-Tu</shortName>
        <ecNumber evidence="2">3.6.5.3</ecNumber>
    </recommendedName>
</protein>
<name>EFTU_MESH2</name>
<gene>
    <name evidence="2" type="primary">tuf</name>
    <name type="ordered locus">mhp540</name>
</gene>
<evidence type="ECO:0000250" key="1"/>
<evidence type="ECO:0000255" key="2">
    <source>
        <dbReference type="HAMAP-Rule" id="MF_00118"/>
    </source>
</evidence>
<keyword id="KW-0963">Cytoplasm</keyword>
<keyword id="KW-0251">Elongation factor</keyword>
<keyword id="KW-0342">GTP-binding</keyword>
<keyword id="KW-0378">Hydrolase</keyword>
<keyword id="KW-0460">Magnesium</keyword>
<keyword id="KW-0479">Metal-binding</keyword>
<keyword id="KW-0547">Nucleotide-binding</keyword>
<keyword id="KW-0648">Protein biosynthesis</keyword>
<reference key="1">
    <citation type="journal article" date="2004" name="J. Bacteriol.">
        <title>The genome sequence of Mycoplasma hyopneumoniae strain 232, the agent of swine mycoplasmosis.</title>
        <authorList>
            <person name="Minion F.C."/>
            <person name="Lefkowitz E.J."/>
            <person name="Madsen M.L."/>
            <person name="Cleary B.J."/>
            <person name="Swartzell S.M."/>
            <person name="Mahairas G.G."/>
        </authorList>
    </citation>
    <scope>NUCLEOTIDE SEQUENCE [LARGE SCALE GENOMIC DNA]</scope>
    <source>
        <strain>232</strain>
    </source>
</reference>
<organism>
    <name type="scientific">Mesomycoplasma hyopneumoniae (strain 232)</name>
    <name type="common">Mycoplasma hyopneumoniae</name>
    <dbReference type="NCBI Taxonomy" id="295358"/>
    <lineage>
        <taxon>Bacteria</taxon>
        <taxon>Bacillati</taxon>
        <taxon>Mycoplasmatota</taxon>
        <taxon>Mycoplasmoidales</taxon>
        <taxon>Metamycoplasmataceae</taxon>
        <taxon>Mesomycoplasma</taxon>
    </lineage>
</organism>
<feature type="chain" id="PRO_0000337435" description="Elongation factor Tu">
    <location>
        <begin position="1"/>
        <end position="402"/>
    </location>
</feature>
<feature type="domain" description="tr-type G">
    <location>
        <begin position="16"/>
        <end position="211"/>
    </location>
</feature>
<feature type="region of interest" description="G1" evidence="1">
    <location>
        <begin position="25"/>
        <end position="32"/>
    </location>
</feature>
<feature type="region of interest" description="G2" evidence="1">
    <location>
        <begin position="66"/>
        <end position="70"/>
    </location>
</feature>
<feature type="region of interest" description="G3" evidence="1">
    <location>
        <begin position="87"/>
        <end position="90"/>
    </location>
</feature>
<feature type="region of interest" description="G4" evidence="1">
    <location>
        <begin position="142"/>
        <end position="145"/>
    </location>
</feature>
<feature type="region of interest" description="G5" evidence="1">
    <location>
        <begin position="181"/>
        <end position="183"/>
    </location>
</feature>
<feature type="binding site" evidence="2">
    <location>
        <begin position="25"/>
        <end position="32"/>
    </location>
    <ligand>
        <name>GTP</name>
        <dbReference type="ChEBI" id="CHEBI:37565"/>
    </ligand>
</feature>
<feature type="binding site" evidence="2">
    <location>
        <position position="32"/>
    </location>
    <ligand>
        <name>Mg(2+)</name>
        <dbReference type="ChEBI" id="CHEBI:18420"/>
    </ligand>
</feature>
<feature type="binding site" evidence="2">
    <location>
        <begin position="87"/>
        <end position="91"/>
    </location>
    <ligand>
        <name>GTP</name>
        <dbReference type="ChEBI" id="CHEBI:37565"/>
    </ligand>
</feature>
<feature type="binding site" evidence="2">
    <location>
        <begin position="142"/>
        <end position="145"/>
    </location>
    <ligand>
        <name>GTP</name>
        <dbReference type="ChEBI" id="CHEBI:37565"/>
    </ligand>
</feature>
<sequence length="402" mass="44094">MAVVKTTGKKDFDRSKEHINIGTIGHVDHGKTTLTAAISTVLAKKGLAEAKDYASIDAAPEEKARGITINTAHIEYSTDKRHYAHVDCPGHADYIKNMITGAAQMDGAILVVAATDGPMPQTREHILLSKQVGVPKMVVFLNKIDLLEGEEEMVDLVEVEIRELLSSYDFDGDNTPIIRGSARGALEGKPEWEAKVLELMDAVDSYIDSPVREMDKPFLMAVEDVFTITGRGTVATGKVERGQVKLNEEVEIVGYREEPKKTVITGIEMFNKNLQTAMAGDNAGVLLRGVDRKDIERGQVIAKPKTIIPHTKFKAAIYALKKEEGGRHTPFFKNYKPQFYFRTTDVTGGIEFEPGREMVIPGDNVDLTVELIAPIAVEQGTKFSIREGGRTVGAGTVTEIIK</sequence>
<dbReference type="EC" id="3.6.5.3" evidence="2"/>
<dbReference type="EMBL" id="AE017332">
    <property type="protein sequence ID" value="AAV27941.1"/>
    <property type="molecule type" value="Genomic_DNA"/>
</dbReference>
<dbReference type="RefSeq" id="WP_011206373.1">
    <property type="nucleotide sequence ID" value="NC_006360.1"/>
</dbReference>
<dbReference type="SMR" id="Q600B6"/>
<dbReference type="KEGG" id="mhy:mhp540"/>
<dbReference type="eggNOG" id="COG0050">
    <property type="taxonomic scope" value="Bacteria"/>
</dbReference>
<dbReference type="HOGENOM" id="CLU_007265_0_0_14"/>
<dbReference type="PhylomeDB" id="Q600B6"/>
<dbReference type="Proteomes" id="UP000006822">
    <property type="component" value="Chromosome"/>
</dbReference>
<dbReference type="GO" id="GO:0005829">
    <property type="term" value="C:cytosol"/>
    <property type="evidence" value="ECO:0007669"/>
    <property type="project" value="TreeGrafter"/>
</dbReference>
<dbReference type="GO" id="GO:0005525">
    <property type="term" value="F:GTP binding"/>
    <property type="evidence" value="ECO:0007669"/>
    <property type="project" value="UniProtKB-UniRule"/>
</dbReference>
<dbReference type="GO" id="GO:0003924">
    <property type="term" value="F:GTPase activity"/>
    <property type="evidence" value="ECO:0007669"/>
    <property type="project" value="InterPro"/>
</dbReference>
<dbReference type="GO" id="GO:0003746">
    <property type="term" value="F:translation elongation factor activity"/>
    <property type="evidence" value="ECO:0007669"/>
    <property type="project" value="UniProtKB-UniRule"/>
</dbReference>
<dbReference type="CDD" id="cd01884">
    <property type="entry name" value="EF_Tu"/>
    <property type="match status" value="1"/>
</dbReference>
<dbReference type="CDD" id="cd03697">
    <property type="entry name" value="EFTU_II"/>
    <property type="match status" value="1"/>
</dbReference>
<dbReference type="CDD" id="cd03707">
    <property type="entry name" value="EFTU_III"/>
    <property type="match status" value="1"/>
</dbReference>
<dbReference type="FunFam" id="2.40.30.10:FF:000001">
    <property type="entry name" value="Elongation factor Tu"/>
    <property type="match status" value="1"/>
</dbReference>
<dbReference type="FunFam" id="3.40.50.300:FF:000003">
    <property type="entry name" value="Elongation factor Tu"/>
    <property type="match status" value="1"/>
</dbReference>
<dbReference type="Gene3D" id="3.40.50.300">
    <property type="entry name" value="P-loop containing nucleotide triphosphate hydrolases"/>
    <property type="match status" value="1"/>
</dbReference>
<dbReference type="Gene3D" id="2.40.30.10">
    <property type="entry name" value="Translation factors"/>
    <property type="match status" value="2"/>
</dbReference>
<dbReference type="HAMAP" id="MF_00118_B">
    <property type="entry name" value="EF_Tu_B"/>
    <property type="match status" value="1"/>
</dbReference>
<dbReference type="InterPro" id="IPR041709">
    <property type="entry name" value="EF-Tu_GTP-bd"/>
</dbReference>
<dbReference type="InterPro" id="IPR050055">
    <property type="entry name" value="EF-Tu_GTPase"/>
</dbReference>
<dbReference type="InterPro" id="IPR004161">
    <property type="entry name" value="EFTu-like_2"/>
</dbReference>
<dbReference type="InterPro" id="IPR033720">
    <property type="entry name" value="EFTU_2"/>
</dbReference>
<dbReference type="InterPro" id="IPR031157">
    <property type="entry name" value="G_TR_CS"/>
</dbReference>
<dbReference type="InterPro" id="IPR027417">
    <property type="entry name" value="P-loop_NTPase"/>
</dbReference>
<dbReference type="InterPro" id="IPR005225">
    <property type="entry name" value="Small_GTP-bd"/>
</dbReference>
<dbReference type="InterPro" id="IPR000795">
    <property type="entry name" value="T_Tr_GTP-bd_dom"/>
</dbReference>
<dbReference type="InterPro" id="IPR009000">
    <property type="entry name" value="Transl_B-barrel_sf"/>
</dbReference>
<dbReference type="InterPro" id="IPR009001">
    <property type="entry name" value="Transl_elong_EF1A/Init_IF2_C"/>
</dbReference>
<dbReference type="InterPro" id="IPR004541">
    <property type="entry name" value="Transl_elong_EFTu/EF1A_bac/org"/>
</dbReference>
<dbReference type="InterPro" id="IPR004160">
    <property type="entry name" value="Transl_elong_EFTu/EF1A_C"/>
</dbReference>
<dbReference type="NCBIfam" id="TIGR00485">
    <property type="entry name" value="EF-Tu"/>
    <property type="match status" value="1"/>
</dbReference>
<dbReference type="NCBIfam" id="NF000766">
    <property type="entry name" value="PRK00049.1"/>
    <property type="match status" value="1"/>
</dbReference>
<dbReference type="NCBIfam" id="NF009372">
    <property type="entry name" value="PRK12735.1"/>
    <property type="match status" value="1"/>
</dbReference>
<dbReference type="NCBIfam" id="NF009373">
    <property type="entry name" value="PRK12736.1"/>
    <property type="match status" value="1"/>
</dbReference>
<dbReference type="NCBIfam" id="TIGR00231">
    <property type="entry name" value="small_GTP"/>
    <property type="match status" value="1"/>
</dbReference>
<dbReference type="PANTHER" id="PTHR43721:SF22">
    <property type="entry name" value="ELONGATION FACTOR TU, MITOCHONDRIAL"/>
    <property type="match status" value="1"/>
</dbReference>
<dbReference type="PANTHER" id="PTHR43721">
    <property type="entry name" value="ELONGATION FACTOR TU-RELATED"/>
    <property type="match status" value="1"/>
</dbReference>
<dbReference type="Pfam" id="PF00009">
    <property type="entry name" value="GTP_EFTU"/>
    <property type="match status" value="1"/>
</dbReference>
<dbReference type="Pfam" id="PF03144">
    <property type="entry name" value="GTP_EFTU_D2"/>
    <property type="match status" value="1"/>
</dbReference>
<dbReference type="Pfam" id="PF03143">
    <property type="entry name" value="GTP_EFTU_D3"/>
    <property type="match status" value="1"/>
</dbReference>
<dbReference type="PRINTS" id="PR00315">
    <property type="entry name" value="ELONGATNFCT"/>
</dbReference>
<dbReference type="SUPFAM" id="SSF50465">
    <property type="entry name" value="EF-Tu/eEF-1alpha/eIF2-gamma C-terminal domain"/>
    <property type="match status" value="1"/>
</dbReference>
<dbReference type="SUPFAM" id="SSF52540">
    <property type="entry name" value="P-loop containing nucleoside triphosphate hydrolases"/>
    <property type="match status" value="1"/>
</dbReference>
<dbReference type="SUPFAM" id="SSF50447">
    <property type="entry name" value="Translation proteins"/>
    <property type="match status" value="1"/>
</dbReference>
<dbReference type="PROSITE" id="PS00301">
    <property type="entry name" value="G_TR_1"/>
    <property type="match status" value="1"/>
</dbReference>
<dbReference type="PROSITE" id="PS51722">
    <property type="entry name" value="G_TR_2"/>
    <property type="match status" value="1"/>
</dbReference>
<comment type="function">
    <text evidence="2">GTP hydrolase that promotes the GTP-dependent binding of aminoacyl-tRNA to the A-site of ribosomes during protein biosynthesis.</text>
</comment>
<comment type="catalytic activity">
    <reaction evidence="2">
        <text>GTP + H2O = GDP + phosphate + H(+)</text>
        <dbReference type="Rhea" id="RHEA:19669"/>
        <dbReference type="ChEBI" id="CHEBI:15377"/>
        <dbReference type="ChEBI" id="CHEBI:15378"/>
        <dbReference type="ChEBI" id="CHEBI:37565"/>
        <dbReference type="ChEBI" id="CHEBI:43474"/>
        <dbReference type="ChEBI" id="CHEBI:58189"/>
        <dbReference type="EC" id="3.6.5.3"/>
    </reaction>
    <physiologicalReaction direction="left-to-right" evidence="2">
        <dbReference type="Rhea" id="RHEA:19670"/>
    </physiologicalReaction>
</comment>
<comment type="subunit">
    <text evidence="2">Monomer.</text>
</comment>
<comment type="subcellular location">
    <subcellularLocation>
        <location evidence="2">Cytoplasm</location>
    </subcellularLocation>
</comment>
<comment type="similarity">
    <text evidence="2">Belongs to the TRAFAC class translation factor GTPase superfamily. Classic translation factor GTPase family. EF-Tu/EF-1A subfamily.</text>
</comment>
<proteinExistence type="inferred from homology"/>